<sequence>MPGPPALRRRLLLLLLVLLIAGSAGAAPLPQTGAGEAPPAAEVSSSFVILCVCSLIILIVLIANCVSCCKDPEIDFKEFEDNFDDEIDFTPPAEDTPSVQSPAEVFTLSVPNISLPAPSQFQPSVEGLKSQVARHSLNYIQEIGNGWFGKVLLGEIYTGTSVARVIVKELKASANPKEQDTFLKNGEPYYILQHPNILQCVGQCVEAIPYLLVFEFCDLGDLKAYLRSEQEHMRGDSQTMLLQRMACEVAAGLAAMHKLHFLHSDLALRNCFLTSDLNVKVGDYGIGFSRYKEDYIETDDKKVFPLRWTAPELVTSFQDRLLTADQTKYSNIWSLGVTLWELFDNAAQPYSNLSNLDVLNQVIRERDTKLPKPQLEQPYSDRWYEVLQFCWLSPEKRPAAEDVHRLLTYLRLQSQRDSEVDFEQQWNALKPNTNSRDSSNNAAFPILDHFARDRLGREMEEVLTVTETSQGLSFEYVWEAAKHDHFDERSRGHLDEGLSYTSIFYPVEVFESSLSDPGPGKQDDSGQDVPLRVPGVVPVFDAHNLSVGSDYYIQLEEKSGSNLELDYPPALLTTDMDNPERTGPELSQLTALRSVELEESSTDEDFFQSSTDPKDSSLPGDLHVTSGPESPFNNIFNDVDKSEDLPSHQKIFDLMELNGVQADFKPATLSSSLDNPKESVITGHFEKEKPRKIFDSEPLCLSDNLMHQDNFDPLNVQELSENFLFLQEKNLLKGSLSSKEHINDLQTELKNAGFTEAMLETSCRNSLDTELQFAENKPGLSLLQENVSTKGDDTDVMLTGDTLSTSLQSSPEVQVPPTSFETEETPRRVPPDSLPTQGETQPTCLDVIVPEDCLHQDISPDAVTVPVEILSTDARTHSLDNRSQDSPGESEETLRLTESDSVLADDILASRVSVGSSLPELGQELHNKPFSEDHHSHRRLEKNLEAVETLNQLNSKDAAKEAGLVSALSSDSTSQDSLLEDSLSAPFPASEPSLETPDSLESVDVHEALLDSLGSHTPQKLVPPDKPADSGYETENLESPEWTLHPAPEGTADSEPATTGDGGHSGLPPNPVIVISDAGDGHRGTEVTPETFTAGSQGSYRDSAYFSDNDSEPEKRSEEVPGTSPSALVLVQEQPLPEPVLPEQSPAAQDSCLEARKSQPDESCLSALHNSSDLELRATPEPAQTGVPQQVHPTEDEASSPWSVLNAELSSGDDFETQDDRPCTLASTGTNTNELLAYTNSALDKSLSSHSEGPKLKEPDIEGKYLGKLGVSGMLDLSEDGMDADEEDENSDDSDEDLRAFNLHSLSSESEDETEHPVPIILSNEDGRHLRSLLKPTAANAPDPLPEDWKKEKKAVTFFDDVTVYLFDQETPTKELGPCGGEACGPDLSGPAPASGSPYLSRCINSESSTDEEGGGFEWDDDFSPDPFMSKTTSNLLSSKPSLQTSKYFSPPPPARSTEQSWPHSAPYSRFSISPANIASFSLTHLTDSDIEQGGSSEDGEKD</sequence>
<protein>
    <recommendedName>
        <fullName>Serine/threonine-protein kinase LMTK2</fullName>
        <ecNumber>2.7.11.1</ecNumber>
    </recommendedName>
    <alternativeName>
        <fullName>Apoptosis-associated tyrosine kinase 2</fullName>
    </alternativeName>
    <alternativeName>
        <fullName>Brain-enriched kinase</fullName>
        <shortName>hBREK</shortName>
    </alternativeName>
    <alternativeName>
        <fullName>CDK5/p35-regulated kinase</fullName>
        <shortName>CPRK</shortName>
    </alternativeName>
    <alternativeName>
        <fullName>Kinase/phosphatase/inhibitor 2</fullName>
    </alternativeName>
    <alternativeName>
        <fullName>Lemur tyrosine kinase 2</fullName>
    </alternativeName>
    <alternativeName>
        <fullName>Serine/threonine-protein kinase KPI-2</fullName>
    </alternativeName>
</protein>
<feature type="chain" id="PRO_0000259458" description="Serine/threonine-protein kinase LMTK2">
    <location>
        <begin position="1"/>
        <end position="1503"/>
    </location>
</feature>
<feature type="topological domain" description="Cytoplasmic" evidence="3">
    <location>
        <begin position="1"/>
        <end position="10"/>
    </location>
</feature>
<feature type="transmembrane region" description="Helical" evidence="3">
    <location>
        <begin position="11"/>
        <end position="31"/>
    </location>
</feature>
<feature type="topological domain" description="Lumenal" evidence="3">
    <location>
        <begin position="32"/>
        <end position="42"/>
    </location>
</feature>
<feature type="transmembrane region" description="Helical" evidence="3">
    <location>
        <begin position="43"/>
        <end position="63"/>
    </location>
</feature>
<feature type="topological domain" description="Cytoplasmic" evidence="3">
    <location>
        <begin position="64"/>
        <end position="1503"/>
    </location>
</feature>
<feature type="domain" description="Protein kinase" evidence="4">
    <location>
        <begin position="137"/>
        <end position="407"/>
    </location>
</feature>
<feature type="region of interest" description="Disordered" evidence="6">
    <location>
        <begin position="597"/>
        <end position="622"/>
    </location>
</feature>
<feature type="region of interest" description="Disordered" evidence="6">
    <location>
        <begin position="804"/>
        <end position="840"/>
    </location>
</feature>
<feature type="region of interest" description="Disordered" evidence="6">
    <location>
        <begin position="875"/>
        <end position="898"/>
    </location>
</feature>
<feature type="region of interest" description="Disordered" evidence="6">
    <location>
        <begin position="970"/>
        <end position="999"/>
    </location>
</feature>
<feature type="region of interest" description="Disordered" evidence="6">
    <location>
        <begin position="1013"/>
        <end position="1202"/>
    </location>
</feature>
<feature type="region of interest" description="Disordered" evidence="6">
    <location>
        <begin position="1276"/>
        <end position="1317"/>
    </location>
</feature>
<feature type="region of interest" description="Disordered" evidence="6">
    <location>
        <begin position="1372"/>
        <end position="1469"/>
    </location>
</feature>
<feature type="compositionally biased region" description="Acidic residues" evidence="6">
    <location>
        <begin position="597"/>
        <end position="606"/>
    </location>
</feature>
<feature type="compositionally biased region" description="Polar residues" evidence="6">
    <location>
        <begin position="804"/>
        <end position="820"/>
    </location>
</feature>
<feature type="compositionally biased region" description="Low complexity" evidence="6">
    <location>
        <begin position="970"/>
        <end position="984"/>
    </location>
</feature>
<feature type="compositionally biased region" description="Polar residues" evidence="6">
    <location>
        <begin position="1088"/>
        <end position="1100"/>
    </location>
</feature>
<feature type="compositionally biased region" description="Acidic residues" evidence="6">
    <location>
        <begin position="1277"/>
        <end position="1296"/>
    </location>
</feature>
<feature type="compositionally biased region" description="Acidic residues" evidence="6">
    <location>
        <begin position="1409"/>
        <end position="1424"/>
    </location>
</feature>
<feature type="compositionally biased region" description="Polar residues" evidence="6">
    <location>
        <begin position="1430"/>
        <end position="1448"/>
    </location>
</feature>
<feature type="active site" description="Proton acceptor" evidence="4 5">
    <location>
        <position position="265"/>
    </location>
</feature>
<feature type="binding site" evidence="4">
    <location>
        <begin position="143"/>
        <end position="151"/>
    </location>
    <ligand>
        <name>ATP</name>
        <dbReference type="ChEBI" id="CHEBI:30616"/>
    </ligand>
</feature>
<feature type="binding site" evidence="4">
    <location>
        <position position="168"/>
    </location>
    <ligand>
        <name>ATP</name>
        <dbReference type="ChEBI" id="CHEBI:30616"/>
    </ligand>
</feature>
<feature type="modified residue" description="Phosphothreonine" evidence="2">
    <location>
        <position position="805"/>
    </location>
</feature>
<feature type="modified residue" description="Phosphoserine" evidence="2">
    <location>
        <position position="806"/>
    </location>
</feature>
<feature type="modified residue" description="Phosphoserine" evidence="12">
    <location>
        <position position="886"/>
    </location>
</feature>
<feature type="modified residue" description="Phosphoserine" evidence="12">
    <location>
        <position position="1107"/>
    </location>
</feature>
<feature type="modified residue" description="Phosphoserine" evidence="2">
    <location>
        <position position="1305"/>
    </location>
</feature>
<feature type="modified residue" description="Phosphoserine" evidence="2">
    <location>
        <position position="1307"/>
    </location>
</feature>
<feature type="modified residue" description="Phosphoserine" evidence="2">
    <location>
        <position position="1308"/>
    </location>
</feature>
<feature type="modified residue" description="Phosphoserine" evidence="2">
    <location>
        <position position="1310"/>
    </location>
</feature>
<feature type="modified residue" description="Phosphoserine" evidence="12">
    <location>
        <position position="1450"/>
    </location>
</feature>
<feature type="modified residue" description="Phosphoserine" evidence="2">
    <location>
        <position position="1496"/>
    </location>
</feature>
<feature type="modified residue" description="Phosphoserine" evidence="2">
    <location>
        <position position="1497"/>
    </location>
</feature>
<feature type="sequence variant" id="VAR_028940" description="In dbSNP:rs3735252.">
    <original>P</original>
    <variation>A</variation>
    <location>
        <position position="30"/>
    </location>
</feature>
<feature type="sequence variant" id="VAR_041727" description="In a lung large cell carcinoma sample; somatic mutation; dbSNP:rs147940573." evidence="9">
    <original>D</original>
    <variation>H</variation>
    <location>
        <position position="484"/>
    </location>
</feature>
<feature type="sequence variant" id="VAR_041728" description="In dbSNP:rs34461195." evidence="9">
    <original>V</original>
    <variation>I</variation>
    <location>
        <position position="595"/>
    </location>
</feature>
<feature type="sequence variant" id="VAR_041729" description="In dbSNP:rs34628253." evidence="9">
    <original>V</original>
    <variation>M</variation>
    <location>
        <position position="624"/>
    </location>
</feature>
<feature type="sequence variant" id="VAR_041730" description="In dbSNP:rs56204700." evidence="9">
    <original>I</original>
    <variation>T</variation>
    <location>
        <position position="693"/>
    </location>
</feature>
<feature type="sequence variant" id="VAR_028941" description="In dbSNP:rs11765552." evidence="7 9">
    <original>L</original>
    <variation>M</variation>
    <location>
        <position position="780"/>
    </location>
</feature>
<feature type="sequence variant" id="VAR_041731" description="In dbSNP:rs56196840." evidence="9">
    <original>V</original>
    <variation>F</variation>
    <location>
        <position position="849"/>
    </location>
</feature>
<feature type="sequence variant" id="VAR_041732" description="In dbSNP:rs34005293." evidence="9">
    <original>A</original>
    <variation>T</variation>
    <location>
        <position position="862"/>
    </location>
</feature>
<feature type="sequence variant" id="VAR_041733" description="In dbSNP:rs55867257." evidence="9">
    <original>S</original>
    <variation>R</variation>
    <location>
        <position position="916"/>
    </location>
</feature>
<feature type="sequence variant" id="VAR_028942" description="In dbSNP:rs3801295." evidence="9">
    <original>D</original>
    <variation>N</variation>
    <location>
        <position position="1061"/>
    </location>
</feature>
<feature type="sequence variant" id="VAR_041734" description="In dbSNP:rs35912712." evidence="9">
    <original>D</original>
    <variation>N</variation>
    <location>
        <position position="1220"/>
    </location>
</feature>
<feature type="sequence variant" id="VAR_041735" description="In dbSNP:rs56343792." evidence="9">
    <original>A</original>
    <variation>G</variation>
    <location>
        <position position="1341"/>
    </location>
</feature>
<feature type="sequence variant" id="VAR_041736" description="In dbSNP:rs45488394." evidence="9">
    <original>S</original>
    <variation>N</variation>
    <location>
        <position position="1401"/>
    </location>
</feature>
<feature type="sequence conflict" description="In Ref. 1; AAN08717." evidence="11" ref="1">
    <original>S</original>
    <variation>I</variation>
    <location>
        <position position="910"/>
    </location>
</feature>
<feature type="sequence conflict" description="In Ref. 2; BAA83031." evidence="11" ref="2">
    <original>QTSKYFSPPPP</original>
    <variation>PSTLPAFPSHT</variation>
    <location>
        <begin position="1444"/>
        <end position="1454"/>
    </location>
</feature>
<feature type="sequence conflict" description="In Ref. 2; BAA83031." evidence="11" ref="2">
    <location>
        <begin position="1455"/>
        <end position="1503"/>
    </location>
</feature>
<accession>Q8IWU2</accession>
<accession>A4D272</accession>
<accession>Q75MG7</accession>
<accession>Q9UPS3</accession>
<dbReference type="EC" id="2.7.11.1"/>
<dbReference type="EMBL" id="AY130988">
    <property type="protein sequence ID" value="AAN08717.1"/>
    <property type="molecule type" value="mRNA"/>
</dbReference>
<dbReference type="EMBL" id="AB029002">
    <property type="protein sequence ID" value="BAA83031.2"/>
    <property type="status" value="ALT_INIT"/>
    <property type="molecule type" value="mRNA"/>
</dbReference>
<dbReference type="EMBL" id="AC073101">
    <property type="protein sequence ID" value="AAS07515.1"/>
    <property type="molecule type" value="Genomic_DNA"/>
</dbReference>
<dbReference type="EMBL" id="CH471091">
    <property type="protein sequence ID" value="EAW76721.1"/>
    <property type="molecule type" value="Genomic_DNA"/>
</dbReference>
<dbReference type="EMBL" id="AC091654">
    <property type="status" value="NOT_ANNOTATED_CDS"/>
    <property type="molecule type" value="Genomic_DNA"/>
</dbReference>
<dbReference type="EMBL" id="CH236956">
    <property type="protein sequence ID" value="EAL23894.1"/>
    <property type="molecule type" value="Genomic_DNA"/>
</dbReference>
<dbReference type="CCDS" id="CCDS5654.1"/>
<dbReference type="RefSeq" id="NP_055731.2">
    <property type="nucleotide sequence ID" value="NM_014916.3"/>
</dbReference>
<dbReference type="SMR" id="Q8IWU2"/>
<dbReference type="BioGRID" id="116524">
    <property type="interactions" value="103"/>
</dbReference>
<dbReference type="FunCoup" id="Q8IWU2">
    <property type="interactions" value="1430"/>
</dbReference>
<dbReference type="IntAct" id="Q8IWU2">
    <property type="interactions" value="85"/>
</dbReference>
<dbReference type="MINT" id="Q8IWU2"/>
<dbReference type="STRING" id="9606.ENSP00000297293"/>
<dbReference type="GlyGen" id="Q8IWU2">
    <property type="glycosylation" value="2 sites, 2 N-linked glycans (2 sites)"/>
</dbReference>
<dbReference type="iPTMnet" id="Q8IWU2"/>
<dbReference type="PhosphoSitePlus" id="Q8IWU2"/>
<dbReference type="SwissPalm" id="Q8IWU2"/>
<dbReference type="BioMuta" id="LMTK2"/>
<dbReference type="CPTAC" id="non-CPTAC-6030"/>
<dbReference type="CPTAC" id="non-CPTAC-6031"/>
<dbReference type="jPOST" id="Q8IWU2"/>
<dbReference type="MassIVE" id="Q8IWU2"/>
<dbReference type="PaxDb" id="9606-ENSP00000297293"/>
<dbReference type="PeptideAtlas" id="Q8IWU2"/>
<dbReference type="ProteomicsDB" id="70894"/>
<dbReference type="Pumba" id="Q8IWU2"/>
<dbReference type="Antibodypedia" id="2093">
    <property type="antibodies" value="237 antibodies from 32 providers"/>
</dbReference>
<dbReference type="DNASU" id="22853"/>
<dbReference type="Ensembl" id="ENST00000297293.6">
    <property type="protein sequence ID" value="ENSP00000297293.5"/>
    <property type="gene ID" value="ENSG00000164715.6"/>
</dbReference>
<dbReference type="GeneID" id="22853"/>
<dbReference type="KEGG" id="hsa:22853"/>
<dbReference type="MANE-Select" id="ENST00000297293.6">
    <property type="protein sequence ID" value="ENSP00000297293.5"/>
    <property type="RefSeq nucleotide sequence ID" value="NM_014916.4"/>
    <property type="RefSeq protein sequence ID" value="NP_055731.2"/>
</dbReference>
<dbReference type="UCSC" id="uc003upd.3">
    <property type="organism name" value="human"/>
</dbReference>
<dbReference type="AGR" id="HGNC:17880"/>
<dbReference type="CTD" id="22853"/>
<dbReference type="DisGeNET" id="22853"/>
<dbReference type="GeneCards" id="LMTK2"/>
<dbReference type="HGNC" id="HGNC:17880">
    <property type="gene designation" value="LMTK2"/>
</dbReference>
<dbReference type="HPA" id="ENSG00000164715">
    <property type="expression patterns" value="Low tissue specificity"/>
</dbReference>
<dbReference type="MIM" id="610989">
    <property type="type" value="gene"/>
</dbReference>
<dbReference type="neXtProt" id="NX_Q8IWU2"/>
<dbReference type="OpenTargets" id="ENSG00000164715"/>
<dbReference type="PharmGKB" id="PA134884391"/>
<dbReference type="VEuPathDB" id="HostDB:ENSG00000164715"/>
<dbReference type="eggNOG" id="ENOG502QSD2">
    <property type="taxonomic scope" value="Eukaryota"/>
</dbReference>
<dbReference type="GeneTree" id="ENSGT00940000158475"/>
<dbReference type="HOGENOM" id="CLU_004618_0_0_1"/>
<dbReference type="InParanoid" id="Q8IWU2"/>
<dbReference type="OMA" id="SHKSVSC"/>
<dbReference type="OrthoDB" id="5973359at2759"/>
<dbReference type="PAN-GO" id="Q8IWU2">
    <property type="GO annotations" value="6 GO annotations based on evolutionary models"/>
</dbReference>
<dbReference type="PhylomeDB" id="Q8IWU2"/>
<dbReference type="TreeFam" id="TF332280"/>
<dbReference type="PathwayCommons" id="Q8IWU2"/>
<dbReference type="SignaLink" id="Q8IWU2"/>
<dbReference type="SIGNOR" id="Q8IWU2"/>
<dbReference type="BioGRID-ORCS" id="22853">
    <property type="hits" value="9 hits in 1190 CRISPR screens"/>
</dbReference>
<dbReference type="CD-CODE" id="FB4E32DD">
    <property type="entry name" value="Presynaptic clusters and postsynaptic densities"/>
</dbReference>
<dbReference type="ChiTaRS" id="LMTK2">
    <property type="organism name" value="human"/>
</dbReference>
<dbReference type="GeneWiki" id="LMTK2"/>
<dbReference type="GenomeRNAi" id="22853"/>
<dbReference type="Pharos" id="Q8IWU2">
    <property type="development level" value="Tbio"/>
</dbReference>
<dbReference type="PRO" id="PR:Q8IWU2"/>
<dbReference type="Proteomes" id="UP000005640">
    <property type="component" value="Chromosome 7"/>
</dbReference>
<dbReference type="RNAct" id="Q8IWU2">
    <property type="molecule type" value="protein"/>
</dbReference>
<dbReference type="Bgee" id="ENSG00000164715">
    <property type="expression patterns" value="Expressed in middle temporal gyrus and 187 other cell types or tissues"/>
</dbReference>
<dbReference type="GO" id="GO:0005769">
    <property type="term" value="C:early endosome"/>
    <property type="evidence" value="ECO:0000314"/>
    <property type="project" value="UniProtKB"/>
</dbReference>
<dbReference type="GO" id="GO:0005794">
    <property type="term" value="C:Golgi apparatus"/>
    <property type="evidence" value="ECO:0000314"/>
    <property type="project" value="UniProtKB"/>
</dbReference>
<dbReference type="GO" id="GO:0030426">
    <property type="term" value="C:growth cone"/>
    <property type="evidence" value="ECO:0007669"/>
    <property type="project" value="Ensembl"/>
</dbReference>
<dbReference type="GO" id="GO:0016020">
    <property type="term" value="C:membrane"/>
    <property type="evidence" value="ECO:0000314"/>
    <property type="project" value="UniProtKB"/>
</dbReference>
<dbReference type="GO" id="GO:0043025">
    <property type="term" value="C:neuronal cell body"/>
    <property type="evidence" value="ECO:0007669"/>
    <property type="project" value="Ensembl"/>
</dbReference>
<dbReference type="GO" id="GO:0048471">
    <property type="term" value="C:perinuclear region of cytoplasm"/>
    <property type="evidence" value="ECO:0000314"/>
    <property type="project" value="UniProtKB"/>
</dbReference>
<dbReference type="GO" id="GO:0055037">
    <property type="term" value="C:recycling endosome"/>
    <property type="evidence" value="ECO:0000314"/>
    <property type="project" value="UniProtKB"/>
</dbReference>
<dbReference type="GO" id="GO:0005524">
    <property type="term" value="F:ATP binding"/>
    <property type="evidence" value="ECO:0000303"/>
    <property type="project" value="UniProtKB"/>
</dbReference>
<dbReference type="GO" id="GO:0070853">
    <property type="term" value="F:myosin VI binding"/>
    <property type="evidence" value="ECO:0000353"/>
    <property type="project" value="UniProtKB"/>
</dbReference>
<dbReference type="GO" id="GO:0004672">
    <property type="term" value="F:protein kinase activity"/>
    <property type="evidence" value="ECO:0000318"/>
    <property type="project" value="GO_Central"/>
</dbReference>
<dbReference type="GO" id="GO:0004864">
    <property type="term" value="F:protein phosphatase inhibitor activity"/>
    <property type="evidence" value="ECO:0000314"/>
    <property type="project" value="UniProtKB"/>
</dbReference>
<dbReference type="GO" id="GO:0106310">
    <property type="term" value="F:protein serine kinase activity"/>
    <property type="evidence" value="ECO:0007669"/>
    <property type="project" value="RHEA"/>
</dbReference>
<dbReference type="GO" id="GO:0004674">
    <property type="term" value="F:protein serine/threonine kinase activity"/>
    <property type="evidence" value="ECO:0000314"/>
    <property type="project" value="UniProtKB"/>
</dbReference>
<dbReference type="GO" id="GO:0045022">
    <property type="term" value="P:early endosome to late endosome transport"/>
    <property type="evidence" value="ECO:0000315"/>
    <property type="project" value="UniProtKB"/>
</dbReference>
<dbReference type="GO" id="GO:0032456">
    <property type="term" value="P:endocytic recycling"/>
    <property type="evidence" value="ECO:0000315"/>
    <property type="project" value="UniProtKB"/>
</dbReference>
<dbReference type="GO" id="GO:0018105">
    <property type="term" value="P:peptidyl-serine phosphorylation"/>
    <property type="evidence" value="ECO:0000314"/>
    <property type="project" value="UniProtKB"/>
</dbReference>
<dbReference type="GO" id="GO:0018107">
    <property type="term" value="P:peptidyl-threonine phosphorylation"/>
    <property type="evidence" value="ECO:0000314"/>
    <property type="project" value="UniProtKB"/>
</dbReference>
<dbReference type="GO" id="GO:0046777">
    <property type="term" value="P:protein autophosphorylation"/>
    <property type="evidence" value="ECO:0000314"/>
    <property type="project" value="UniProtKB"/>
</dbReference>
<dbReference type="GO" id="GO:0006468">
    <property type="term" value="P:protein phosphorylation"/>
    <property type="evidence" value="ECO:0000314"/>
    <property type="project" value="UniProtKB"/>
</dbReference>
<dbReference type="GO" id="GO:0001881">
    <property type="term" value="P:receptor recycling"/>
    <property type="evidence" value="ECO:0000315"/>
    <property type="project" value="UniProtKB"/>
</dbReference>
<dbReference type="GO" id="GO:0033572">
    <property type="term" value="P:transferrin transport"/>
    <property type="evidence" value="ECO:0000315"/>
    <property type="project" value="UniProtKB"/>
</dbReference>
<dbReference type="CDD" id="cd05086">
    <property type="entry name" value="PTKc_Aatyk2"/>
    <property type="match status" value="1"/>
</dbReference>
<dbReference type="FunFam" id="3.30.200.20:FF:000275">
    <property type="entry name" value="Apoptosis associated tyrosine kinase"/>
    <property type="match status" value="1"/>
</dbReference>
<dbReference type="FunFam" id="1.10.510.10:FF:000386">
    <property type="entry name" value="serine/threonine-protein kinase LMTK2 isoform X1"/>
    <property type="match status" value="1"/>
</dbReference>
<dbReference type="Gene3D" id="1.10.510.10">
    <property type="entry name" value="Transferase(Phosphotransferase) domain 1"/>
    <property type="match status" value="1"/>
</dbReference>
<dbReference type="InterPro" id="IPR011009">
    <property type="entry name" value="Kinase-like_dom_sf"/>
</dbReference>
<dbReference type="InterPro" id="IPR000719">
    <property type="entry name" value="Prot_kinase_dom"/>
</dbReference>
<dbReference type="InterPro" id="IPR017441">
    <property type="entry name" value="Protein_kinase_ATP_BS"/>
</dbReference>
<dbReference type="InterPro" id="IPR001245">
    <property type="entry name" value="Ser-Thr/Tyr_kinase_cat_dom"/>
</dbReference>
<dbReference type="InterPro" id="IPR008266">
    <property type="entry name" value="Tyr_kinase_AS"/>
</dbReference>
<dbReference type="PANTHER" id="PTHR24417">
    <property type="entry name" value="SERINE/THREONINE-PROTEIN KINASE LMTK1"/>
    <property type="match status" value="1"/>
</dbReference>
<dbReference type="PANTHER" id="PTHR24417:SF8">
    <property type="entry name" value="SERINE_THREONINE-PROTEIN KINASE LMTK2"/>
    <property type="match status" value="1"/>
</dbReference>
<dbReference type="Pfam" id="PF07714">
    <property type="entry name" value="PK_Tyr_Ser-Thr"/>
    <property type="match status" value="1"/>
</dbReference>
<dbReference type="PRINTS" id="PR00109">
    <property type="entry name" value="TYRKINASE"/>
</dbReference>
<dbReference type="SUPFAM" id="SSF56112">
    <property type="entry name" value="Protein kinase-like (PK-like)"/>
    <property type="match status" value="1"/>
</dbReference>
<dbReference type="PROSITE" id="PS00107">
    <property type="entry name" value="PROTEIN_KINASE_ATP"/>
    <property type="match status" value="1"/>
</dbReference>
<dbReference type="PROSITE" id="PS50011">
    <property type="entry name" value="PROTEIN_KINASE_DOM"/>
    <property type="match status" value="1"/>
</dbReference>
<dbReference type="PROSITE" id="PS00109">
    <property type="entry name" value="PROTEIN_KINASE_TYR"/>
    <property type="match status" value="1"/>
</dbReference>
<reference key="1">
    <citation type="journal article" date="2002" name="J. Biol. Chem.">
        <title>A novel transmembrane Ser/Thr kinase complexes with protein phosphatase-1 and inhibitor-2.</title>
        <authorList>
            <person name="Wang H."/>
            <person name="Brautigan D.L."/>
        </authorList>
    </citation>
    <scope>NUCLEOTIDE SEQUENCE [MRNA]</scope>
    <scope>TISSUE SPECIFICITY</scope>
    <scope>INTERACTION WITH PPP1C AND INH2</scope>
    <source>
        <tissue>Cervix carcinoma</tissue>
    </source>
</reference>
<reference key="2">
    <citation type="journal article" date="1999" name="DNA Res.">
        <title>Prediction of the coding sequences of unidentified human genes. XIV. The complete sequences of 100 new cDNA clones from brain which code for large proteins in vitro.</title>
        <authorList>
            <person name="Kikuno R."/>
            <person name="Nagase T."/>
            <person name="Ishikawa K."/>
            <person name="Hirosawa M."/>
            <person name="Miyajima N."/>
            <person name="Tanaka A."/>
            <person name="Kotani H."/>
            <person name="Nomura N."/>
            <person name="Ohara O."/>
        </authorList>
    </citation>
    <scope>NUCLEOTIDE SEQUENCE [LARGE SCALE MRNA]</scope>
    <scope>VARIANT MET-780</scope>
    <source>
        <tissue>Brain</tissue>
    </source>
</reference>
<reference key="3">
    <citation type="journal article" date="2003" name="Science">
        <title>Human chromosome 7: DNA sequence and biology.</title>
        <authorList>
            <person name="Scherer S.W."/>
            <person name="Cheung J."/>
            <person name="MacDonald J.R."/>
            <person name="Osborne L.R."/>
            <person name="Nakabayashi K."/>
            <person name="Herbrick J.-A."/>
            <person name="Carson A.R."/>
            <person name="Parker-Katiraee L."/>
            <person name="Skaug J."/>
            <person name="Khaja R."/>
            <person name="Zhang J."/>
            <person name="Hudek A.K."/>
            <person name="Li M."/>
            <person name="Haddad M."/>
            <person name="Duggan G.E."/>
            <person name="Fernandez B.A."/>
            <person name="Kanematsu E."/>
            <person name="Gentles S."/>
            <person name="Christopoulos C.C."/>
            <person name="Choufani S."/>
            <person name="Kwasnicka D."/>
            <person name="Zheng X.H."/>
            <person name="Lai Z."/>
            <person name="Nusskern D.R."/>
            <person name="Zhang Q."/>
            <person name="Gu Z."/>
            <person name="Lu F."/>
            <person name="Zeesman S."/>
            <person name="Nowaczyk M.J."/>
            <person name="Teshima I."/>
            <person name="Chitayat D."/>
            <person name="Shuman C."/>
            <person name="Weksberg R."/>
            <person name="Zackai E.H."/>
            <person name="Grebe T.A."/>
            <person name="Cox S.R."/>
            <person name="Kirkpatrick S.J."/>
            <person name="Rahman N."/>
            <person name="Friedman J.M."/>
            <person name="Heng H.H.Q."/>
            <person name="Pelicci P.G."/>
            <person name="Lo-Coco F."/>
            <person name="Belloni E."/>
            <person name="Shaffer L.G."/>
            <person name="Pober B."/>
            <person name="Morton C.C."/>
            <person name="Gusella J.F."/>
            <person name="Bruns G.A.P."/>
            <person name="Korf B.R."/>
            <person name="Quade B.J."/>
            <person name="Ligon A.H."/>
            <person name="Ferguson H."/>
            <person name="Higgins A.W."/>
            <person name="Leach N.T."/>
            <person name="Herrick S.R."/>
            <person name="Lemyre E."/>
            <person name="Farra C.G."/>
            <person name="Kim H.-G."/>
            <person name="Summers A.M."/>
            <person name="Gripp K.W."/>
            <person name="Roberts W."/>
            <person name="Szatmari P."/>
            <person name="Winsor E.J.T."/>
            <person name="Grzeschik K.-H."/>
            <person name="Teebi A."/>
            <person name="Minassian B.A."/>
            <person name="Kere J."/>
            <person name="Armengol L."/>
            <person name="Pujana M.A."/>
            <person name="Estivill X."/>
            <person name="Wilson M.D."/>
            <person name="Koop B.F."/>
            <person name="Tosi S."/>
            <person name="Moore G.E."/>
            <person name="Boright A.P."/>
            <person name="Zlotorynski E."/>
            <person name="Kerem B."/>
            <person name="Kroisel P.M."/>
            <person name="Petek E."/>
            <person name="Oscier D.G."/>
            <person name="Mould S.J."/>
            <person name="Doehner H."/>
            <person name="Doehner K."/>
            <person name="Rommens J.M."/>
            <person name="Vincent J.B."/>
            <person name="Venter J.C."/>
            <person name="Li P.W."/>
            <person name="Mural R.J."/>
            <person name="Adams M.D."/>
            <person name="Tsui L.-C."/>
        </authorList>
    </citation>
    <scope>NUCLEOTIDE SEQUENCE [LARGE SCALE GENOMIC DNA]</scope>
</reference>
<reference key="4">
    <citation type="submission" date="2005-09" db="EMBL/GenBank/DDBJ databases">
        <authorList>
            <person name="Mural R.J."/>
            <person name="Istrail S."/>
            <person name="Sutton G.G."/>
            <person name="Florea L."/>
            <person name="Halpern A.L."/>
            <person name="Mobarry C.M."/>
            <person name="Lippert R."/>
            <person name="Walenz B."/>
            <person name="Shatkay H."/>
            <person name="Dew I."/>
            <person name="Miller J.R."/>
            <person name="Flanigan M.J."/>
            <person name="Edwards N.J."/>
            <person name="Bolanos R."/>
            <person name="Fasulo D."/>
            <person name="Halldorsson B.V."/>
            <person name="Hannenhalli S."/>
            <person name="Turner R."/>
            <person name="Yooseph S."/>
            <person name="Lu F."/>
            <person name="Nusskern D.R."/>
            <person name="Shue B.C."/>
            <person name="Zheng X.H."/>
            <person name="Zhong F."/>
            <person name="Delcher A.L."/>
            <person name="Huson D.H."/>
            <person name="Kravitz S.A."/>
            <person name="Mouchard L."/>
            <person name="Reinert K."/>
            <person name="Remington K.A."/>
            <person name="Clark A.G."/>
            <person name="Waterman M.S."/>
            <person name="Eichler E.E."/>
            <person name="Adams M.D."/>
            <person name="Hunkapiller M.W."/>
            <person name="Myers E.W."/>
            <person name="Venter J.C."/>
        </authorList>
    </citation>
    <scope>NUCLEOTIDE SEQUENCE [LARGE SCALE GENOMIC DNA]</scope>
</reference>
<reference key="5">
    <citation type="journal article" date="2003" name="Nature">
        <title>The DNA sequence of human chromosome 7.</title>
        <authorList>
            <person name="Hillier L.W."/>
            <person name="Fulton R.S."/>
            <person name="Fulton L.A."/>
            <person name="Graves T.A."/>
            <person name="Pepin K.H."/>
            <person name="Wagner-McPherson C."/>
            <person name="Layman D."/>
            <person name="Maas J."/>
            <person name="Jaeger S."/>
            <person name="Walker R."/>
            <person name="Wylie K."/>
            <person name="Sekhon M."/>
            <person name="Becker M.C."/>
            <person name="O'Laughlin M.D."/>
            <person name="Schaller M.E."/>
            <person name="Fewell G.A."/>
            <person name="Delehaunty K.D."/>
            <person name="Miner T.L."/>
            <person name="Nash W.E."/>
            <person name="Cordes M."/>
            <person name="Du H."/>
            <person name="Sun H."/>
            <person name="Edwards J."/>
            <person name="Bradshaw-Cordum H."/>
            <person name="Ali J."/>
            <person name="Andrews S."/>
            <person name="Isak A."/>
            <person name="Vanbrunt A."/>
            <person name="Nguyen C."/>
            <person name="Du F."/>
            <person name="Lamar B."/>
            <person name="Courtney L."/>
            <person name="Kalicki J."/>
            <person name="Ozersky P."/>
            <person name="Bielicki L."/>
            <person name="Scott K."/>
            <person name="Holmes A."/>
            <person name="Harkins R."/>
            <person name="Harris A."/>
            <person name="Strong C.M."/>
            <person name="Hou S."/>
            <person name="Tomlinson C."/>
            <person name="Dauphin-Kohlberg S."/>
            <person name="Kozlowicz-Reilly A."/>
            <person name="Leonard S."/>
            <person name="Rohlfing T."/>
            <person name="Rock S.M."/>
            <person name="Tin-Wollam A.-M."/>
            <person name="Abbott A."/>
            <person name="Minx P."/>
            <person name="Maupin R."/>
            <person name="Strowmatt C."/>
            <person name="Latreille P."/>
            <person name="Miller N."/>
            <person name="Johnson D."/>
            <person name="Murray J."/>
            <person name="Woessner J.P."/>
            <person name="Wendl M.C."/>
            <person name="Yang S.-P."/>
            <person name="Schultz B.R."/>
            <person name="Wallis J.W."/>
            <person name="Spieth J."/>
            <person name="Bieri T.A."/>
            <person name="Nelson J.O."/>
            <person name="Berkowicz N."/>
            <person name="Wohldmann P.E."/>
            <person name="Cook L.L."/>
            <person name="Hickenbotham M.T."/>
            <person name="Eldred J."/>
            <person name="Williams D."/>
            <person name="Bedell J.A."/>
            <person name="Mardis E.R."/>
            <person name="Clifton S.W."/>
            <person name="Chissoe S.L."/>
            <person name="Marra M.A."/>
            <person name="Raymond C."/>
            <person name="Haugen E."/>
            <person name="Gillett W."/>
            <person name="Zhou Y."/>
            <person name="James R."/>
            <person name="Phelps K."/>
            <person name="Iadanoto S."/>
            <person name="Bubb K."/>
            <person name="Simms E."/>
            <person name="Levy R."/>
            <person name="Clendenning J."/>
            <person name="Kaul R."/>
            <person name="Kent W.J."/>
            <person name="Furey T.S."/>
            <person name="Baertsch R.A."/>
            <person name="Brent M.R."/>
            <person name="Keibler E."/>
            <person name="Flicek P."/>
            <person name="Bork P."/>
            <person name="Suyama M."/>
            <person name="Bailey J.A."/>
            <person name="Portnoy M.E."/>
            <person name="Torrents D."/>
            <person name="Chinwalla A.T."/>
            <person name="Gish W.R."/>
            <person name="Eddy S.R."/>
            <person name="McPherson J.D."/>
            <person name="Olson M.V."/>
            <person name="Eichler E.E."/>
            <person name="Green E.D."/>
            <person name="Waterston R.H."/>
            <person name="Wilson R.K."/>
        </authorList>
    </citation>
    <scope>NUCLEOTIDE SEQUENCE [LARGE SCALE GENOMIC DNA]</scope>
</reference>
<reference key="6">
    <citation type="journal article" date="2004" name="Genes Cells">
        <title>Involvement of BREK, a serine/threonine kinase enriched in brain, in NGF signalling.</title>
        <authorList>
            <person name="Kawa S."/>
            <person name="Fujimoto J."/>
            <person name="Tezuka T."/>
            <person name="Nakazawa T."/>
            <person name="Yamamoto T."/>
        </authorList>
    </citation>
    <scope>CHARACTERIZATION</scope>
</reference>
<reference key="7">
    <citation type="journal article" date="2006" name="Mol. Cell. Proteomics">
        <title>Peptide microarray analysis of substrate specificity of the transmembrane Ser/Thr kinase KPI-2 reveals reactivity with cystic fibrosis transmembrane conductance regulator and phosphorylase.</title>
        <authorList>
            <person name="Wang H."/>
            <person name="Brautigan D.L."/>
        </authorList>
    </citation>
    <scope>PHOSPHORYLATION</scope>
</reference>
<reference key="8">
    <citation type="journal article" date="2009" name="Sci. Signal.">
        <title>Quantitative phosphoproteomic analysis of T cell receptor signaling reveals system-wide modulation of protein-protein interactions.</title>
        <authorList>
            <person name="Mayya V."/>
            <person name="Lundgren D.H."/>
            <person name="Hwang S.-I."/>
            <person name="Rezaul K."/>
            <person name="Wu L."/>
            <person name="Eng J.K."/>
            <person name="Rodionov V."/>
            <person name="Han D.K."/>
        </authorList>
    </citation>
    <scope>IDENTIFICATION BY MASS SPECTROMETRY [LARGE SCALE ANALYSIS]</scope>
    <source>
        <tissue>Leukemic T-cell</tissue>
    </source>
</reference>
<reference key="9">
    <citation type="journal article" date="2013" name="Am. J. Physiol.">
        <title>Determination of the membrane topology of lemur tyrosine kinase 2 (LMTK2) by fluorescence protease protection.</title>
        <authorList>
            <person name="Nixon A."/>
            <person name="Jia Y."/>
            <person name="White C."/>
            <person name="Bradbury N.A."/>
        </authorList>
    </citation>
    <scope>TOPOLOGY</scope>
    <scope>SUBCELLULAR LOCATION</scope>
</reference>
<reference key="10">
    <citation type="journal article" date="2013" name="J. Proteome Res.">
        <title>Toward a comprehensive characterization of a human cancer cell phosphoproteome.</title>
        <authorList>
            <person name="Zhou H."/>
            <person name="Di Palma S."/>
            <person name="Preisinger C."/>
            <person name="Peng M."/>
            <person name="Polat A.N."/>
            <person name="Heck A.J."/>
            <person name="Mohammed S."/>
        </authorList>
    </citation>
    <scope>PHOSPHORYLATION [LARGE SCALE ANALYSIS] AT SER-886; SER-1107 AND SER-1450</scope>
    <scope>IDENTIFICATION BY MASS SPECTROMETRY [LARGE SCALE ANALYSIS]</scope>
    <source>
        <tissue>Cervix carcinoma</tissue>
        <tissue>Erythroleukemia</tissue>
    </source>
</reference>
<reference key="11">
    <citation type="journal article" date="2014" name="J. Proteomics">
        <title>An enzyme assisted RP-RPLC approach for in-depth analysis of human liver phosphoproteome.</title>
        <authorList>
            <person name="Bian Y."/>
            <person name="Song C."/>
            <person name="Cheng K."/>
            <person name="Dong M."/>
            <person name="Wang F."/>
            <person name="Huang J."/>
            <person name="Sun D."/>
            <person name="Wang L."/>
            <person name="Ye M."/>
            <person name="Zou H."/>
        </authorList>
    </citation>
    <scope>IDENTIFICATION BY MASS SPECTROMETRY [LARGE SCALE ANALYSIS]</scope>
    <source>
        <tissue>Liver</tissue>
    </source>
</reference>
<reference key="12">
    <citation type="journal article" date="2007" name="Nature">
        <title>Patterns of somatic mutation in human cancer genomes.</title>
        <authorList>
            <person name="Greenman C."/>
            <person name="Stephens P."/>
            <person name="Smith R."/>
            <person name="Dalgliesh G.L."/>
            <person name="Hunter C."/>
            <person name="Bignell G."/>
            <person name="Davies H."/>
            <person name="Teague J."/>
            <person name="Butler A."/>
            <person name="Stevens C."/>
            <person name="Edkins S."/>
            <person name="O'Meara S."/>
            <person name="Vastrik I."/>
            <person name="Schmidt E.E."/>
            <person name="Avis T."/>
            <person name="Barthorpe S."/>
            <person name="Bhamra G."/>
            <person name="Buck G."/>
            <person name="Choudhury B."/>
            <person name="Clements J."/>
            <person name="Cole J."/>
            <person name="Dicks E."/>
            <person name="Forbes S."/>
            <person name="Gray K."/>
            <person name="Halliday K."/>
            <person name="Harrison R."/>
            <person name="Hills K."/>
            <person name="Hinton J."/>
            <person name="Jenkinson A."/>
            <person name="Jones D."/>
            <person name="Menzies A."/>
            <person name="Mironenko T."/>
            <person name="Perry J."/>
            <person name="Raine K."/>
            <person name="Richardson D."/>
            <person name="Shepherd R."/>
            <person name="Small A."/>
            <person name="Tofts C."/>
            <person name="Varian J."/>
            <person name="Webb T."/>
            <person name="West S."/>
            <person name="Widaa S."/>
            <person name="Yates A."/>
            <person name="Cahill D.P."/>
            <person name="Louis D.N."/>
            <person name="Goldstraw P."/>
            <person name="Nicholson A.G."/>
            <person name="Brasseur F."/>
            <person name="Looijenga L."/>
            <person name="Weber B.L."/>
            <person name="Chiew Y.-E."/>
            <person name="DeFazio A."/>
            <person name="Greaves M.F."/>
            <person name="Green A.R."/>
            <person name="Campbell P."/>
            <person name="Birney E."/>
            <person name="Easton D.F."/>
            <person name="Chenevix-Trench G."/>
            <person name="Tan M.-H."/>
            <person name="Khoo S.K."/>
            <person name="Teh B.T."/>
            <person name="Yuen S.T."/>
            <person name="Leung S.Y."/>
            <person name="Wooster R."/>
            <person name="Futreal P.A."/>
            <person name="Stratton M.R."/>
        </authorList>
    </citation>
    <scope>VARIANTS [LARGE SCALE ANALYSIS] HIS-484; ILE-595; MET-624; THR-693; MET-780; PHE-849; THR-862; ARG-916; ASN-1061; ASN-1220; GLY-1341 AND ASN-1401</scope>
</reference>
<keyword id="KW-0067">ATP-binding</keyword>
<keyword id="KW-0418">Kinase</keyword>
<keyword id="KW-0472">Membrane</keyword>
<keyword id="KW-0547">Nucleotide-binding</keyword>
<keyword id="KW-0597">Phosphoprotein</keyword>
<keyword id="KW-1267">Proteomics identification</keyword>
<keyword id="KW-1185">Reference proteome</keyword>
<keyword id="KW-0723">Serine/threonine-protein kinase</keyword>
<keyword id="KW-0808">Transferase</keyword>
<keyword id="KW-0812">Transmembrane</keyword>
<keyword id="KW-1133">Transmembrane helix</keyword>
<proteinExistence type="evidence at protein level"/>
<evidence type="ECO:0000250" key="1"/>
<evidence type="ECO:0000250" key="2">
    <source>
        <dbReference type="UniProtKB" id="Q3TYD6"/>
    </source>
</evidence>
<evidence type="ECO:0000255" key="3"/>
<evidence type="ECO:0000255" key="4">
    <source>
        <dbReference type="PROSITE-ProRule" id="PRU00159"/>
    </source>
</evidence>
<evidence type="ECO:0000255" key="5">
    <source>
        <dbReference type="PROSITE-ProRule" id="PRU10028"/>
    </source>
</evidence>
<evidence type="ECO:0000256" key="6">
    <source>
        <dbReference type="SAM" id="MobiDB-lite"/>
    </source>
</evidence>
<evidence type="ECO:0000269" key="7">
    <source>
    </source>
</evidence>
<evidence type="ECO:0000269" key="8">
    <source>
    </source>
</evidence>
<evidence type="ECO:0000269" key="9">
    <source>
    </source>
</evidence>
<evidence type="ECO:0000269" key="10">
    <source>
    </source>
</evidence>
<evidence type="ECO:0000305" key="11"/>
<evidence type="ECO:0007744" key="12">
    <source>
    </source>
</evidence>
<comment type="function">
    <text>Phosphorylates PPP1C, phosphorylase b and CFTR.</text>
</comment>
<comment type="catalytic activity">
    <reaction>
        <text>L-seryl-[protein] + ATP = O-phospho-L-seryl-[protein] + ADP + H(+)</text>
        <dbReference type="Rhea" id="RHEA:17989"/>
        <dbReference type="Rhea" id="RHEA-COMP:9863"/>
        <dbReference type="Rhea" id="RHEA-COMP:11604"/>
        <dbReference type="ChEBI" id="CHEBI:15378"/>
        <dbReference type="ChEBI" id="CHEBI:29999"/>
        <dbReference type="ChEBI" id="CHEBI:30616"/>
        <dbReference type="ChEBI" id="CHEBI:83421"/>
        <dbReference type="ChEBI" id="CHEBI:456216"/>
        <dbReference type="EC" id="2.7.11.1"/>
    </reaction>
</comment>
<comment type="catalytic activity">
    <reaction>
        <text>L-threonyl-[protein] + ATP = O-phospho-L-threonyl-[protein] + ADP + H(+)</text>
        <dbReference type="Rhea" id="RHEA:46608"/>
        <dbReference type="Rhea" id="RHEA-COMP:11060"/>
        <dbReference type="Rhea" id="RHEA-COMP:11605"/>
        <dbReference type="ChEBI" id="CHEBI:15378"/>
        <dbReference type="ChEBI" id="CHEBI:30013"/>
        <dbReference type="ChEBI" id="CHEBI:30616"/>
        <dbReference type="ChEBI" id="CHEBI:61977"/>
        <dbReference type="ChEBI" id="CHEBI:456216"/>
        <dbReference type="EC" id="2.7.11.1"/>
    </reaction>
</comment>
<comment type="subunit">
    <text evidence="8">Interacts with PPP1C and inhibitor-2.</text>
</comment>
<comment type="interaction">
    <interactant intactId="EBI-2008933">
        <id>Q8IWU2</id>
    </interactant>
    <interactant intactId="EBI-356283">
        <id>P36873</id>
        <label>PPP1CC</label>
    </interactant>
    <organismsDiffer>false</organismsDiffer>
    <experiments>8</experiments>
</comment>
<comment type="interaction">
    <interactant intactId="EBI-2008933">
        <id>Q8IWU2</id>
    </interactant>
    <interactant intactId="EBI-1056517">
        <id>P41236</id>
        <label>PPP1R2</label>
    </interactant>
    <organismsDiffer>false</organismsDiffer>
    <experiments>4</experiments>
</comment>
<comment type="subcellular location">
    <subcellularLocation>
        <location evidence="10">Membrane</location>
        <topology evidence="10">Multi-pass membrane protein</topology>
    </subcellularLocation>
</comment>
<comment type="tissue specificity">
    <text evidence="8">Mainly expressed in skeletal muscle, and weakly in brain and pancreas.</text>
</comment>
<comment type="PTM">
    <text evidence="1">Autophosphorylated. Phosphorylated (By similarity).</text>
</comment>
<comment type="similarity">
    <text evidence="4">Belongs to the protein kinase superfamily. Tyr protein kinase family.</text>
</comment>
<comment type="sequence caution" evidence="11">
    <conflict type="erroneous initiation">
        <sequence resource="EMBL-CDS" id="BAA83031"/>
    </conflict>
</comment>
<comment type="online information" name="Wikipedia">
    <link uri="https://en.wikipedia.org/wiki/LMTK2"/>
    <text>LMTK2 entry</text>
</comment>
<organism>
    <name type="scientific">Homo sapiens</name>
    <name type="common">Human</name>
    <dbReference type="NCBI Taxonomy" id="9606"/>
    <lineage>
        <taxon>Eukaryota</taxon>
        <taxon>Metazoa</taxon>
        <taxon>Chordata</taxon>
        <taxon>Craniata</taxon>
        <taxon>Vertebrata</taxon>
        <taxon>Euteleostomi</taxon>
        <taxon>Mammalia</taxon>
        <taxon>Eutheria</taxon>
        <taxon>Euarchontoglires</taxon>
        <taxon>Primates</taxon>
        <taxon>Haplorrhini</taxon>
        <taxon>Catarrhini</taxon>
        <taxon>Hominidae</taxon>
        <taxon>Homo</taxon>
    </lineage>
</organism>
<name>LMTK2_HUMAN</name>
<gene>
    <name type="primary">LMTK2</name>
    <name type="synonym">AATYK2</name>
    <name type="synonym">BREK</name>
    <name type="synonym">KIAA1079</name>
    <name type="synonym">KPI2</name>
    <name type="synonym">LMR2</name>
</gene>